<keyword id="KW-0975">Bacterial flagellum</keyword>
<keyword id="KW-0998">Cell outer membrane</keyword>
<keyword id="KW-0449">Lipoprotein</keyword>
<keyword id="KW-0472">Membrane</keyword>
<keyword id="KW-0564">Palmitate</keyword>
<keyword id="KW-1185">Reference proteome</keyword>
<keyword id="KW-0732">Signal</keyword>
<gene>
    <name evidence="1" type="primary">flgH</name>
    <name type="ordered locus">EC55989_1192</name>
</gene>
<comment type="function">
    <text evidence="1">Assembles around the rod to form the L-ring and probably protects the motor/basal body from shearing forces during rotation.</text>
</comment>
<comment type="subunit">
    <text evidence="1">The basal body constitutes a major portion of the flagellar organelle and consists of four rings (L,P,S, and M) mounted on a central rod.</text>
</comment>
<comment type="subcellular location">
    <subcellularLocation>
        <location evidence="1">Cell outer membrane</location>
        <topology evidence="1">Lipid-anchor</topology>
    </subcellularLocation>
    <subcellularLocation>
        <location evidence="1">Bacterial flagellum basal body</location>
    </subcellularLocation>
</comment>
<comment type="similarity">
    <text evidence="1">Belongs to the FlgH family.</text>
</comment>
<feature type="signal peptide" evidence="1">
    <location>
        <begin position="1"/>
        <end position="21"/>
    </location>
</feature>
<feature type="chain" id="PRO_1000134829" description="Flagellar L-ring protein">
    <location>
        <begin position="22"/>
        <end position="232"/>
    </location>
</feature>
<feature type="lipid moiety-binding region" description="N-palmitoyl cysteine" evidence="1">
    <location>
        <position position="22"/>
    </location>
</feature>
<feature type="lipid moiety-binding region" description="S-diacylglycerol cysteine" evidence="1">
    <location>
        <position position="22"/>
    </location>
</feature>
<evidence type="ECO:0000255" key="1">
    <source>
        <dbReference type="HAMAP-Rule" id="MF_00415"/>
    </source>
</evidence>
<organism>
    <name type="scientific">Escherichia coli (strain 55989 / EAEC)</name>
    <dbReference type="NCBI Taxonomy" id="585055"/>
    <lineage>
        <taxon>Bacteria</taxon>
        <taxon>Pseudomonadati</taxon>
        <taxon>Pseudomonadota</taxon>
        <taxon>Gammaproteobacteria</taxon>
        <taxon>Enterobacterales</taxon>
        <taxon>Enterobacteriaceae</taxon>
        <taxon>Escherichia</taxon>
    </lineage>
</organism>
<protein>
    <recommendedName>
        <fullName evidence="1">Flagellar L-ring protein</fullName>
    </recommendedName>
    <alternativeName>
        <fullName evidence="1">Basal body L-ring protein</fullName>
    </alternativeName>
</protein>
<proteinExistence type="inferred from homology"/>
<dbReference type="EMBL" id="CU928145">
    <property type="protein sequence ID" value="CAU97051.1"/>
    <property type="molecule type" value="Genomic_DNA"/>
</dbReference>
<dbReference type="RefSeq" id="WP_001295442.1">
    <property type="nucleotide sequence ID" value="NC_011748.1"/>
</dbReference>
<dbReference type="SMR" id="B7LG13"/>
<dbReference type="GeneID" id="93776328"/>
<dbReference type="KEGG" id="eck:EC55989_1192"/>
<dbReference type="HOGENOM" id="CLU_069313_0_0_6"/>
<dbReference type="Proteomes" id="UP000000746">
    <property type="component" value="Chromosome"/>
</dbReference>
<dbReference type="GO" id="GO:0009427">
    <property type="term" value="C:bacterial-type flagellum basal body, distal rod, L ring"/>
    <property type="evidence" value="ECO:0007669"/>
    <property type="project" value="InterPro"/>
</dbReference>
<dbReference type="GO" id="GO:0009279">
    <property type="term" value="C:cell outer membrane"/>
    <property type="evidence" value="ECO:0007669"/>
    <property type="project" value="UniProtKB-SubCell"/>
</dbReference>
<dbReference type="GO" id="GO:0003774">
    <property type="term" value="F:cytoskeletal motor activity"/>
    <property type="evidence" value="ECO:0007669"/>
    <property type="project" value="InterPro"/>
</dbReference>
<dbReference type="GO" id="GO:0071973">
    <property type="term" value="P:bacterial-type flagellum-dependent cell motility"/>
    <property type="evidence" value="ECO:0007669"/>
    <property type="project" value="InterPro"/>
</dbReference>
<dbReference type="HAMAP" id="MF_00415">
    <property type="entry name" value="FlgH"/>
    <property type="match status" value="1"/>
</dbReference>
<dbReference type="InterPro" id="IPR000527">
    <property type="entry name" value="Flag_Lring"/>
</dbReference>
<dbReference type="NCBIfam" id="NF001301">
    <property type="entry name" value="PRK00249.1-1"/>
    <property type="match status" value="1"/>
</dbReference>
<dbReference type="PANTHER" id="PTHR34933">
    <property type="entry name" value="FLAGELLAR L-RING PROTEIN"/>
    <property type="match status" value="1"/>
</dbReference>
<dbReference type="PANTHER" id="PTHR34933:SF3">
    <property type="entry name" value="FLAGELLAR L-RING PROTEIN"/>
    <property type="match status" value="1"/>
</dbReference>
<dbReference type="Pfam" id="PF02107">
    <property type="entry name" value="FlgH"/>
    <property type="match status" value="1"/>
</dbReference>
<dbReference type="PRINTS" id="PR01008">
    <property type="entry name" value="FLGLRINGFLGH"/>
</dbReference>
<dbReference type="PROSITE" id="PS51257">
    <property type="entry name" value="PROKAR_LIPOPROTEIN"/>
    <property type="match status" value="1"/>
</dbReference>
<name>FLGH_ECO55</name>
<accession>B7LG13</accession>
<sequence>MQKNAAHTYAISSLLVLSLTGCAWIPSTPLVQGATSAQPVPGPTPVANGSIFQSAQPINYGYQPLFEDRRPRNIGDTLTIVLQENVSASKSSSANASRDGKTNFGFDTVPRYLQGLFGNARADVEASGGNTFNGKGGANASNTFSGTLTVTVDQVLVNGNLHVVGEKQIAINQGTEFIRFSGVVNPRTISGSNTVPSTQVADARIEYVGNGYINEAQNMGWLQRFFLNLSPM</sequence>
<reference key="1">
    <citation type="journal article" date="2009" name="PLoS Genet.">
        <title>Organised genome dynamics in the Escherichia coli species results in highly diverse adaptive paths.</title>
        <authorList>
            <person name="Touchon M."/>
            <person name="Hoede C."/>
            <person name="Tenaillon O."/>
            <person name="Barbe V."/>
            <person name="Baeriswyl S."/>
            <person name="Bidet P."/>
            <person name="Bingen E."/>
            <person name="Bonacorsi S."/>
            <person name="Bouchier C."/>
            <person name="Bouvet O."/>
            <person name="Calteau A."/>
            <person name="Chiapello H."/>
            <person name="Clermont O."/>
            <person name="Cruveiller S."/>
            <person name="Danchin A."/>
            <person name="Diard M."/>
            <person name="Dossat C."/>
            <person name="Karoui M.E."/>
            <person name="Frapy E."/>
            <person name="Garry L."/>
            <person name="Ghigo J.M."/>
            <person name="Gilles A.M."/>
            <person name="Johnson J."/>
            <person name="Le Bouguenec C."/>
            <person name="Lescat M."/>
            <person name="Mangenot S."/>
            <person name="Martinez-Jehanne V."/>
            <person name="Matic I."/>
            <person name="Nassif X."/>
            <person name="Oztas S."/>
            <person name="Petit M.A."/>
            <person name="Pichon C."/>
            <person name="Rouy Z."/>
            <person name="Ruf C.S."/>
            <person name="Schneider D."/>
            <person name="Tourret J."/>
            <person name="Vacherie B."/>
            <person name="Vallenet D."/>
            <person name="Medigue C."/>
            <person name="Rocha E.P.C."/>
            <person name="Denamur E."/>
        </authorList>
    </citation>
    <scope>NUCLEOTIDE SEQUENCE [LARGE SCALE GENOMIC DNA]</scope>
    <source>
        <strain>55989 / EAEC</strain>
    </source>
</reference>